<sequence length="135" mass="15542">MVLETISRIIKIQLPAYLKKLPLPETIGGFARLTVSEWLRLLPLLGILALLGYLTIRPFLPKKKKQKDSLINLKIQKENPKVVNEIDIEDLKRTNVCYCRCWRSKTFPVCDKSHIKHNELTGDNVGPLILKKKIL</sequence>
<organism>
    <name type="scientific">Salmo salar</name>
    <name type="common">Atlantic salmon</name>
    <dbReference type="NCBI Taxonomy" id="8030"/>
    <lineage>
        <taxon>Eukaryota</taxon>
        <taxon>Metazoa</taxon>
        <taxon>Chordata</taxon>
        <taxon>Craniata</taxon>
        <taxon>Vertebrata</taxon>
        <taxon>Euteleostomi</taxon>
        <taxon>Actinopterygii</taxon>
        <taxon>Neopterygii</taxon>
        <taxon>Teleostei</taxon>
        <taxon>Protacanthopterygii</taxon>
        <taxon>Salmoniformes</taxon>
        <taxon>Salmonidae</taxon>
        <taxon>Salmoninae</taxon>
        <taxon>Salmo</taxon>
    </lineage>
</organism>
<proteinExistence type="evidence at transcript level"/>
<accession>B9EPI1</accession>
<comment type="function">
    <text evidence="1">Regulator of autophagy that contributes to antagonize becn1-mediated cellular autophagy at the endoplasmic reticulum. Participates in the interaction of bcl2 with becn1 and is required for bcl2-mediated depression of endoplasmic reticulum Ca(2+) stores during autophagy (By similarity).</text>
</comment>
<comment type="cofactor">
    <cofactor evidence="1">
        <name>[2Fe-2S] cluster</name>
        <dbReference type="ChEBI" id="CHEBI:190135"/>
    </cofactor>
    <text evidence="1">Binds 1 [2Fe-2S] cluster.</text>
</comment>
<comment type="subunit">
    <text evidence="1">Homodimer.</text>
</comment>
<comment type="subcellular location">
    <subcellularLocation>
        <location evidence="1">Endoplasmic reticulum membrane</location>
        <topology evidence="1">Single-pass membrane protein</topology>
    </subcellularLocation>
    <subcellularLocation>
        <location evidence="1">Mitochondrion outer membrane</location>
        <topology evidence="1">Single-pass membrane protein</topology>
    </subcellularLocation>
</comment>
<comment type="similarity">
    <text evidence="3">Belongs to the CISD protein family. CISD2 subfamily.</text>
</comment>
<dbReference type="EMBL" id="BT057556">
    <property type="protein sequence ID" value="ACM09428.1"/>
    <property type="molecule type" value="mRNA"/>
</dbReference>
<dbReference type="SMR" id="B9EPI1"/>
<dbReference type="STRING" id="8030.ENSSSAP00000009523"/>
<dbReference type="PaxDb" id="8030-ENSSSAP00000009523"/>
<dbReference type="Ensembl" id="ENSSSAT00070031937">
    <property type="protein sequence ID" value="ENSSSAP00070030519"/>
    <property type="gene ID" value="ENSSSAG00070019992"/>
</dbReference>
<dbReference type="Ensembl" id="ENSSSAT00075009792">
    <property type="protein sequence ID" value="ENSSSAP00075006612"/>
    <property type="gene ID" value="ENSSSAG00075004736"/>
</dbReference>
<dbReference type="GeneID" id="106602754"/>
<dbReference type="KEGG" id="sasa:106602754"/>
<dbReference type="OMA" id="NCANVCY"/>
<dbReference type="OrthoDB" id="341206at7898"/>
<dbReference type="Proteomes" id="UP000087266">
    <property type="component" value="Chromosome ssa04"/>
</dbReference>
<dbReference type="Bgee" id="ENSSSAG00000004742">
    <property type="expression patterns" value="Expressed in fast muscle tissue and 22 other cell types or tissues"/>
</dbReference>
<dbReference type="GO" id="GO:0005789">
    <property type="term" value="C:endoplasmic reticulum membrane"/>
    <property type="evidence" value="ECO:0000250"/>
    <property type="project" value="UniProtKB"/>
</dbReference>
<dbReference type="GO" id="GO:0005741">
    <property type="term" value="C:mitochondrial outer membrane"/>
    <property type="evidence" value="ECO:0000250"/>
    <property type="project" value="UniProtKB"/>
</dbReference>
<dbReference type="GO" id="GO:0051537">
    <property type="term" value="F:2 iron, 2 sulfur cluster binding"/>
    <property type="evidence" value="ECO:0000250"/>
    <property type="project" value="UniProtKB"/>
</dbReference>
<dbReference type="GO" id="GO:0046872">
    <property type="term" value="F:metal ion binding"/>
    <property type="evidence" value="ECO:0007669"/>
    <property type="project" value="UniProtKB-KW"/>
</dbReference>
<dbReference type="GO" id="GO:0042803">
    <property type="term" value="F:protein homodimerization activity"/>
    <property type="evidence" value="ECO:0000250"/>
    <property type="project" value="UniProtKB"/>
</dbReference>
<dbReference type="GO" id="GO:0000422">
    <property type="term" value="P:autophagy of mitochondrion"/>
    <property type="evidence" value="ECO:0000250"/>
    <property type="project" value="UniProtKB"/>
</dbReference>
<dbReference type="GO" id="GO:0010506">
    <property type="term" value="P:regulation of autophagy"/>
    <property type="evidence" value="ECO:0000250"/>
    <property type="project" value="UniProtKB"/>
</dbReference>
<dbReference type="FunFam" id="3.40.5.90:FF:000001">
    <property type="entry name" value="CDGSH iron-sulfur domain-containing protein 1"/>
    <property type="match status" value="1"/>
</dbReference>
<dbReference type="Gene3D" id="3.40.5.90">
    <property type="entry name" value="CDGSH iron-sulfur domain, mitoNEET-type"/>
    <property type="match status" value="1"/>
</dbReference>
<dbReference type="InterPro" id="IPR045131">
    <property type="entry name" value="CISD1/2"/>
</dbReference>
<dbReference type="InterPro" id="IPR018967">
    <property type="entry name" value="FeS-contain_CDGSH-typ"/>
</dbReference>
<dbReference type="InterPro" id="IPR019610">
    <property type="entry name" value="FeS-contain_mitoNEET_N"/>
</dbReference>
<dbReference type="InterPro" id="IPR042216">
    <property type="entry name" value="MitoNEET_CISD"/>
</dbReference>
<dbReference type="PANTHER" id="PTHR13680">
    <property type="entry name" value="CDGSH IRON-SULFUR DOMAIN-CONTAINING PROTEIN 1"/>
    <property type="match status" value="1"/>
</dbReference>
<dbReference type="PANTHER" id="PTHR13680:SF33">
    <property type="entry name" value="CDGSH IRON-SULFUR DOMAIN-CONTAINING PROTEIN 2"/>
    <property type="match status" value="1"/>
</dbReference>
<dbReference type="Pfam" id="PF10660">
    <property type="entry name" value="MitoNEET_N"/>
    <property type="match status" value="1"/>
</dbReference>
<dbReference type="Pfam" id="PF09360">
    <property type="entry name" value="zf-CDGSH"/>
    <property type="match status" value="1"/>
</dbReference>
<dbReference type="SMART" id="SM00704">
    <property type="entry name" value="ZnF_CDGSH"/>
    <property type="match status" value="1"/>
</dbReference>
<evidence type="ECO:0000250" key="1"/>
<evidence type="ECO:0000255" key="2"/>
<evidence type="ECO:0000305" key="3"/>
<name>CID2A_SALSA</name>
<gene>
    <name type="primary">cisd2a</name>
</gene>
<feature type="chain" id="PRO_0000392019" description="CDGSH iron-sulfur domain-containing protein 2A">
    <location>
        <begin position="1"/>
        <end position="135"/>
    </location>
</feature>
<feature type="topological domain" description="Lumenal" evidence="2">
    <location>
        <begin position="1"/>
        <end position="37"/>
    </location>
</feature>
<feature type="transmembrane region" description="Helical" evidence="2">
    <location>
        <begin position="38"/>
        <end position="60"/>
    </location>
</feature>
<feature type="topological domain" description="Cytoplasmic" evidence="2">
    <location>
        <begin position="61"/>
        <end position="135"/>
    </location>
</feature>
<feature type="binding site" evidence="1">
    <location>
        <position position="99"/>
    </location>
    <ligand>
        <name>[2Fe-2S] cluster</name>
        <dbReference type="ChEBI" id="CHEBI:190135"/>
    </ligand>
</feature>
<feature type="binding site" evidence="1">
    <location>
        <position position="101"/>
    </location>
    <ligand>
        <name>[2Fe-2S] cluster</name>
        <dbReference type="ChEBI" id="CHEBI:190135"/>
    </ligand>
</feature>
<feature type="binding site" evidence="1">
    <location>
        <position position="110"/>
    </location>
    <ligand>
        <name>[2Fe-2S] cluster</name>
        <dbReference type="ChEBI" id="CHEBI:190135"/>
    </ligand>
</feature>
<feature type="binding site" evidence="1">
    <location>
        <position position="114"/>
    </location>
    <ligand>
        <name>[2Fe-2S] cluster</name>
        <dbReference type="ChEBI" id="CHEBI:190135"/>
    </ligand>
</feature>
<keyword id="KW-0001">2Fe-2S</keyword>
<keyword id="KW-0072">Autophagy</keyword>
<keyword id="KW-0256">Endoplasmic reticulum</keyword>
<keyword id="KW-0408">Iron</keyword>
<keyword id="KW-0411">Iron-sulfur</keyword>
<keyword id="KW-0472">Membrane</keyword>
<keyword id="KW-0479">Metal-binding</keyword>
<keyword id="KW-0496">Mitochondrion</keyword>
<keyword id="KW-1000">Mitochondrion outer membrane</keyword>
<keyword id="KW-1185">Reference proteome</keyword>
<keyword id="KW-0812">Transmembrane</keyword>
<keyword id="KW-1133">Transmembrane helix</keyword>
<protein>
    <recommendedName>
        <fullName>CDGSH iron-sulfur domain-containing protein 2A</fullName>
    </recommendedName>
</protein>
<reference key="1">
    <citation type="journal article" date="2010" name="BMC Genomics">
        <title>Salmo salar and Esox lucius full-length cDNA sequences reveal changes in evolutionary pressures on a post-tetraploidization genome.</title>
        <authorList>
            <person name="Leong J.S."/>
            <person name="Jantzen S.G."/>
            <person name="von Schalburg K.R."/>
            <person name="Cooper G.A."/>
            <person name="Messmer A.M."/>
            <person name="Liao N.Y."/>
            <person name="Munro S."/>
            <person name="Moore R."/>
            <person name="Holt R.A."/>
            <person name="Jones S.J."/>
            <person name="Davidson W.S."/>
            <person name="Koop B.F."/>
        </authorList>
    </citation>
    <scope>NUCLEOTIDE SEQUENCE [LARGE SCALE MRNA]</scope>
    <source>
        <tissue>Thymus</tissue>
    </source>
</reference>